<evidence type="ECO:0000255" key="1">
    <source>
        <dbReference type="HAMAP-Rule" id="MF_01300"/>
    </source>
</evidence>
<feature type="chain" id="PRO_1000067448" description="C4-dicarboxylate transport protein">
    <location>
        <begin position="1"/>
        <end position="428"/>
    </location>
</feature>
<feature type="transmembrane region" description="Helical" evidence="1">
    <location>
        <begin position="8"/>
        <end position="28"/>
    </location>
</feature>
<feature type="transmembrane region" description="Helical" evidence="1">
    <location>
        <begin position="44"/>
        <end position="64"/>
    </location>
</feature>
<feature type="transmembrane region" description="Helical" evidence="1">
    <location>
        <begin position="76"/>
        <end position="96"/>
    </location>
</feature>
<feature type="transmembrane region" description="Helical" evidence="1">
    <location>
        <begin position="142"/>
        <end position="162"/>
    </location>
</feature>
<feature type="transmembrane region" description="Helical" evidence="1">
    <location>
        <begin position="184"/>
        <end position="204"/>
    </location>
</feature>
<feature type="transmembrane region" description="Helical" evidence="1">
    <location>
        <begin position="222"/>
        <end position="242"/>
    </location>
</feature>
<feature type="transmembrane region" description="Helical" evidence="1">
    <location>
        <begin position="326"/>
        <end position="346"/>
    </location>
</feature>
<feature type="transmembrane region" description="Helical" evidence="1">
    <location>
        <begin position="352"/>
        <end position="372"/>
    </location>
</feature>
<accession>Q1R575</accession>
<dbReference type="EMBL" id="CP000243">
    <property type="protein sequence ID" value="ABE09489.1"/>
    <property type="molecule type" value="Genomic_DNA"/>
</dbReference>
<dbReference type="RefSeq" id="WP_000858214.1">
    <property type="nucleotide sequence ID" value="NZ_CP064825.1"/>
</dbReference>
<dbReference type="SMR" id="Q1R575"/>
<dbReference type="GeneID" id="93778248"/>
<dbReference type="KEGG" id="eci:UTI89_C4060"/>
<dbReference type="HOGENOM" id="CLU_019375_7_0_6"/>
<dbReference type="Proteomes" id="UP000001952">
    <property type="component" value="Chromosome"/>
</dbReference>
<dbReference type="GO" id="GO:0005886">
    <property type="term" value="C:plasma membrane"/>
    <property type="evidence" value="ECO:0007669"/>
    <property type="project" value="UniProtKB-SubCell"/>
</dbReference>
<dbReference type="GO" id="GO:0015138">
    <property type="term" value="F:fumarate transmembrane transporter activity"/>
    <property type="evidence" value="ECO:0007669"/>
    <property type="project" value="TreeGrafter"/>
</dbReference>
<dbReference type="GO" id="GO:0015366">
    <property type="term" value="F:malate:proton symporter activity"/>
    <property type="evidence" value="ECO:0007669"/>
    <property type="project" value="TreeGrafter"/>
</dbReference>
<dbReference type="GO" id="GO:0015141">
    <property type="term" value="F:succinate transmembrane transporter activity"/>
    <property type="evidence" value="ECO:0007669"/>
    <property type="project" value="TreeGrafter"/>
</dbReference>
<dbReference type="GO" id="GO:0070778">
    <property type="term" value="P:L-aspartate transmembrane transport"/>
    <property type="evidence" value="ECO:0007669"/>
    <property type="project" value="TreeGrafter"/>
</dbReference>
<dbReference type="FunFam" id="1.10.3860.10:FF:000001">
    <property type="entry name" value="C4-dicarboxylate transport protein"/>
    <property type="match status" value="1"/>
</dbReference>
<dbReference type="Gene3D" id="1.10.3860.10">
    <property type="entry name" value="Sodium:dicarboxylate symporter"/>
    <property type="match status" value="1"/>
</dbReference>
<dbReference type="HAMAP" id="MF_01300">
    <property type="entry name" value="C4_dicarb_transport"/>
    <property type="match status" value="1"/>
</dbReference>
<dbReference type="InterPro" id="IPR023954">
    <property type="entry name" value="C4_dicarb_transport"/>
</dbReference>
<dbReference type="InterPro" id="IPR001991">
    <property type="entry name" value="Na-dicarboxylate_symporter"/>
</dbReference>
<dbReference type="InterPro" id="IPR018107">
    <property type="entry name" value="Na-dicarboxylate_symporter_CS"/>
</dbReference>
<dbReference type="InterPro" id="IPR036458">
    <property type="entry name" value="Na:dicarbo_symporter_sf"/>
</dbReference>
<dbReference type="NCBIfam" id="NF002461">
    <property type="entry name" value="PRK01663.1"/>
    <property type="match status" value="1"/>
</dbReference>
<dbReference type="NCBIfam" id="NF009587">
    <property type="entry name" value="PRK13027.1"/>
    <property type="match status" value="1"/>
</dbReference>
<dbReference type="PANTHER" id="PTHR42865:SF1">
    <property type="entry name" value="AEROBIC C4-DICARBOXYLATE TRANSPORT PROTEIN"/>
    <property type="match status" value="1"/>
</dbReference>
<dbReference type="PANTHER" id="PTHR42865">
    <property type="entry name" value="PROTON/GLUTAMATE-ASPARTATE SYMPORTER"/>
    <property type="match status" value="1"/>
</dbReference>
<dbReference type="Pfam" id="PF00375">
    <property type="entry name" value="SDF"/>
    <property type="match status" value="1"/>
</dbReference>
<dbReference type="PRINTS" id="PR00173">
    <property type="entry name" value="EDTRNSPORT"/>
</dbReference>
<dbReference type="SUPFAM" id="SSF118215">
    <property type="entry name" value="Proton glutamate symport protein"/>
    <property type="match status" value="1"/>
</dbReference>
<dbReference type="PROSITE" id="PS00713">
    <property type="entry name" value="NA_DICARBOXYL_SYMP_1"/>
    <property type="match status" value="1"/>
</dbReference>
<dbReference type="PROSITE" id="PS00714">
    <property type="entry name" value="NA_DICARBOXYL_SYMP_2"/>
    <property type="match status" value="1"/>
</dbReference>
<comment type="function">
    <text evidence="1">Responsible for the transport of dicarboxylates such as succinate, fumarate, and malate from the periplasm across the membrane.</text>
</comment>
<comment type="subcellular location">
    <subcellularLocation>
        <location evidence="1">Cell inner membrane</location>
        <topology evidence="1">Multi-pass membrane protein</topology>
    </subcellularLocation>
</comment>
<comment type="similarity">
    <text evidence="1">Belongs to the dicarboxylate/amino acid:cation symporter (DAACS) (TC 2.A.23) family.</text>
</comment>
<organism>
    <name type="scientific">Escherichia coli (strain UTI89 / UPEC)</name>
    <dbReference type="NCBI Taxonomy" id="364106"/>
    <lineage>
        <taxon>Bacteria</taxon>
        <taxon>Pseudomonadati</taxon>
        <taxon>Pseudomonadota</taxon>
        <taxon>Gammaproteobacteria</taxon>
        <taxon>Enterobacterales</taxon>
        <taxon>Enterobacteriaceae</taxon>
        <taxon>Escherichia</taxon>
    </lineage>
</organism>
<gene>
    <name evidence="1" type="primary">dctA</name>
    <name type="ordered locus">UTI89_C4060</name>
</gene>
<keyword id="KW-0997">Cell inner membrane</keyword>
<keyword id="KW-1003">Cell membrane</keyword>
<keyword id="KW-0472">Membrane</keyword>
<keyword id="KW-0769">Symport</keyword>
<keyword id="KW-0812">Transmembrane</keyword>
<keyword id="KW-1133">Transmembrane helix</keyword>
<keyword id="KW-0813">Transport</keyword>
<proteinExistence type="inferred from homology"/>
<name>DCTA_ECOUT</name>
<reference key="1">
    <citation type="journal article" date="2006" name="Proc. Natl. Acad. Sci. U.S.A.">
        <title>Identification of genes subject to positive selection in uropathogenic strains of Escherichia coli: a comparative genomics approach.</title>
        <authorList>
            <person name="Chen S.L."/>
            <person name="Hung C.-S."/>
            <person name="Xu J."/>
            <person name="Reigstad C.S."/>
            <person name="Magrini V."/>
            <person name="Sabo A."/>
            <person name="Blasiar D."/>
            <person name="Bieri T."/>
            <person name="Meyer R.R."/>
            <person name="Ozersky P."/>
            <person name="Armstrong J.R."/>
            <person name="Fulton R.S."/>
            <person name="Latreille J.P."/>
            <person name="Spieth J."/>
            <person name="Hooton T.M."/>
            <person name="Mardis E.R."/>
            <person name="Hultgren S.J."/>
            <person name="Gordon J.I."/>
        </authorList>
    </citation>
    <scope>NUCLEOTIDE SEQUENCE [LARGE SCALE GENOMIC DNA]</scope>
    <source>
        <strain>UTI89 / UPEC</strain>
    </source>
</reference>
<protein>
    <recommendedName>
        <fullName evidence="1">C4-dicarboxylate transport protein</fullName>
    </recommendedName>
</protein>
<sequence length="428" mass="45436">MKTSLFKSLYFQVLTAIAIGILLGHFYPEIGEQMKPLGDGFVKLIKMIIAPVIFCTVVTGIAGMESMKAVGRTGAVALLYFEIVSTIALIIGLIIVNVVQPGAGMNVDPATLDAKAVAVYADQAKDQGIVAFIMDVIPASVIGAFASGNILQVLLFAVLFGFALHRLGSKGQLIFNVIESFSQVIFGIINMIMRLAPIGAFGAMAFTIGKYGVGTLVQLGQLIICFYITCILFVVLVLGSIAKATGFSIFKFIRYIREELLIVLGTSSSESALPRMLDKMEKLGCRKSVVGLVIPTGYSFNLDGTSIYLTMAAVFIAQATNSQMDIVHQITLLIVLLLSSKGAAGVTGSGFIVLAATLSAVGHLPVAGLALILGIDRFMSEARALTNLVGNGVATIVVAKWVKELDHKKLDDVLNNRAPDGKTHELSS</sequence>